<dbReference type="EMBL" id="AE002160">
    <property type="protein sequence ID" value="AAF39445.1"/>
    <property type="molecule type" value="Genomic_DNA"/>
</dbReference>
<dbReference type="PIR" id="G81682">
    <property type="entry name" value="G81682"/>
</dbReference>
<dbReference type="RefSeq" id="WP_010230999.1">
    <property type="nucleotide sequence ID" value="NZ_CP063055.1"/>
</dbReference>
<dbReference type="SMR" id="Q9PK56"/>
<dbReference type="GeneID" id="1245976"/>
<dbReference type="KEGG" id="cmu:TC_0614"/>
<dbReference type="eggNOG" id="COG1925">
    <property type="taxonomic scope" value="Bacteria"/>
</dbReference>
<dbReference type="HOGENOM" id="CLU_136230_1_2_0"/>
<dbReference type="OrthoDB" id="9809047at2"/>
<dbReference type="Proteomes" id="UP000000800">
    <property type="component" value="Chromosome"/>
</dbReference>
<dbReference type="GO" id="GO:0005737">
    <property type="term" value="C:cytoplasm"/>
    <property type="evidence" value="ECO:0007669"/>
    <property type="project" value="UniProtKB-SubCell"/>
</dbReference>
<dbReference type="GO" id="GO:0009401">
    <property type="term" value="P:phosphoenolpyruvate-dependent sugar phosphotransferase system"/>
    <property type="evidence" value="ECO:0007669"/>
    <property type="project" value="UniProtKB-KW"/>
</dbReference>
<dbReference type="CDD" id="cd00367">
    <property type="entry name" value="PTS-HPr_like"/>
    <property type="match status" value="1"/>
</dbReference>
<dbReference type="Gene3D" id="3.30.1340.10">
    <property type="entry name" value="HPr-like"/>
    <property type="match status" value="1"/>
</dbReference>
<dbReference type="InterPro" id="IPR050399">
    <property type="entry name" value="HPr"/>
</dbReference>
<dbReference type="InterPro" id="IPR000032">
    <property type="entry name" value="HPr-like"/>
</dbReference>
<dbReference type="InterPro" id="IPR035895">
    <property type="entry name" value="HPr-like_sf"/>
</dbReference>
<dbReference type="InterPro" id="IPR002114">
    <property type="entry name" value="PTS_HPr_Ser_P_site"/>
</dbReference>
<dbReference type="NCBIfam" id="TIGR01003">
    <property type="entry name" value="PTS_HPr_family"/>
    <property type="match status" value="1"/>
</dbReference>
<dbReference type="PANTHER" id="PTHR33705">
    <property type="entry name" value="PHOSPHOCARRIER PROTEIN HPR"/>
    <property type="match status" value="1"/>
</dbReference>
<dbReference type="PANTHER" id="PTHR33705:SF2">
    <property type="entry name" value="PHOSPHOCARRIER PROTEIN NPR"/>
    <property type="match status" value="1"/>
</dbReference>
<dbReference type="Pfam" id="PF00381">
    <property type="entry name" value="PTS-HPr"/>
    <property type="match status" value="1"/>
</dbReference>
<dbReference type="PRINTS" id="PR00107">
    <property type="entry name" value="PHOSPHOCPHPR"/>
</dbReference>
<dbReference type="SUPFAM" id="SSF55594">
    <property type="entry name" value="HPr-like"/>
    <property type="match status" value="1"/>
</dbReference>
<dbReference type="PROSITE" id="PS51350">
    <property type="entry name" value="PTS_HPR_DOM"/>
    <property type="match status" value="1"/>
</dbReference>
<dbReference type="PROSITE" id="PS00589">
    <property type="entry name" value="PTS_HPR_SER"/>
    <property type="match status" value="1"/>
</dbReference>
<gene>
    <name type="primary">ptsH</name>
    <name type="ordered locus">TC_0614</name>
</gene>
<proteinExistence type="inferred from homology"/>
<protein>
    <recommendedName>
        <fullName>Phosphocarrier protein HPr</fullName>
    </recommendedName>
    <alternativeName>
        <fullName>Histidine-containing protein</fullName>
    </alternativeName>
</protein>
<evidence type="ECO:0000250" key="1"/>
<evidence type="ECO:0000255" key="2">
    <source>
        <dbReference type="PROSITE-ProRule" id="PRU00681"/>
    </source>
</evidence>
<evidence type="ECO:0000305" key="3"/>
<comment type="function">
    <text evidence="1">General (non sugar-specific) component of the phosphoenolpyruvate-dependent sugar phosphotransferase system (sugar PTS). This major carbohydrate active-transport system catalyzes the phosphorylation of incoming sugar substrates concomitantly with their translocation across the cell membrane. The phosphoryl group from phosphoenolpyruvate (PEP) is transferred to the phosphoryl carrier protein HPr by enzyme I. Phospho-HPr then transfers it to the PTS EIIA domain.</text>
</comment>
<comment type="subcellular location">
    <subcellularLocation>
        <location evidence="1">Cytoplasm</location>
    </subcellularLocation>
</comment>
<comment type="similarity">
    <text evidence="3">Belongs to the HPr family.</text>
</comment>
<organism>
    <name type="scientific">Chlamydia muridarum (strain MoPn / Nigg)</name>
    <dbReference type="NCBI Taxonomy" id="243161"/>
    <lineage>
        <taxon>Bacteria</taxon>
        <taxon>Pseudomonadati</taxon>
        <taxon>Chlamydiota</taxon>
        <taxon>Chlamydiia</taxon>
        <taxon>Chlamydiales</taxon>
        <taxon>Chlamydiaceae</taxon>
        <taxon>Chlamydia/Chlamydophila group</taxon>
        <taxon>Chlamydia</taxon>
    </lineage>
</organism>
<reference key="1">
    <citation type="journal article" date="2000" name="Nucleic Acids Res.">
        <title>Genome sequences of Chlamydia trachomatis MoPn and Chlamydia pneumoniae AR39.</title>
        <authorList>
            <person name="Read T.D."/>
            <person name="Brunham R.C."/>
            <person name="Shen C."/>
            <person name="Gill S.R."/>
            <person name="Heidelberg J.F."/>
            <person name="White O."/>
            <person name="Hickey E.K."/>
            <person name="Peterson J.D."/>
            <person name="Utterback T.R."/>
            <person name="Berry K.J."/>
            <person name="Bass S."/>
            <person name="Linher K.D."/>
            <person name="Weidman J.F."/>
            <person name="Khouri H.M."/>
            <person name="Craven B."/>
            <person name="Bowman C."/>
            <person name="Dodson R.J."/>
            <person name="Gwinn M.L."/>
            <person name="Nelson W.C."/>
            <person name="DeBoy R.T."/>
            <person name="Kolonay J.F."/>
            <person name="McClarty G."/>
            <person name="Salzberg S.L."/>
            <person name="Eisen J.A."/>
            <person name="Fraser C.M."/>
        </authorList>
    </citation>
    <scope>NUCLEOTIDE SEQUENCE [LARGE SCALE GENOMIC DNA]</scope>
    <source>
        <strain>MoPn / Nigg</strain>
    </source>
</reference>
<name>PTHP_CHLMU</name>
<accession>Q9PK56</accession>
<keyword id="KW-0963">Cytoplasm</keyword>
<keyword id="KW-0598">Phosphotransferase system</keyword>
<keyword id="KW-0762">Sugar transport</keyword>
<keyword id="KW-0813">Transport</keyword>
<sequence length="104" mass="11148">MSGGDDLVLHNPVEDGELSAIFMIRNPSGIHVRPAGTIVKLFDGEDCEATFTYLGKTVNARSVMSILMLGASYNGEITVRIKGPSASRVMQKLAEVFNSGFGEL</sequence>
<feature type="chain" id="PRO_0000107847" description="Phosphocarrier protein HPr">
    <location>
        <begin position="1"/>
        <end position="104"/>
    </location>
</feature>
<feature type="domain" description="HPr" evidence="2">
    <location>
        <begin position="17"/>
        <end position="104"/>
    </location>
</feature>
<feature type="active site" description="Pros-phosphohistidine intermediate" evidence="2">
    <location>
        <position position="31"/>
    </location>
</feature>